<accession>Q8IZF0</accession>
<accession>Q6P2S6</accession>
<accession>Q6ZMI7</accession>
<accession>Q8IZZ1</accession>
<accession>Q8TAH1</accession>
<protein>
    <recommendedName>
        <fullName evidence="17">Sodium leak channel NALCN</fullName>
    </recommendedName>
    <alternativeName>
        <fullName>CanIon</fullName>
    </alternativeName>
    <alternativeName>
        <fullName>Sodium leak channel non-selective protein</fullName>
    </alternativeName>
    <alternativeName>
        <fullName>Voltage gated channel-like protein 1</fullName>
    </alternativeName>
</protein>
<proteinExistence type="evidence at protein level"/>
<gene>
    <name evidence="18" type="primary">NALCN</name>
    <name evidence="16" type="synonym">VGCNL1</name>
</gene>
<keyword id="KW-0002">3D-structure</keyword>
<keyword id="KW-0025">Alternative splicing</keyword>
<keyword id="KW-1003">Cell membrane</keyword>
<keyword id="KW-0175">Coiled coil</keyword>
<keyword id="KW-0225">Disease variant</keyword>
<keyword id="KW-1015">Disulfide bond</keyword>
<keyword id="KW-0325">Glycoprotein</keyword>
<keyword id="KW-0407">Ion channel</keyword>
<keyword id="KW-0406">Ion transport</keyword>
<keyword id="KW-0472">Membrane</keyword>
<keyword id="KW-0523">Neurodegeneration</keyword>
<keyword id="KW-1267">Proteomics identification</keyword>
<keyword id="KW-1185">Reference proteome</keyword>
<keyword id="KW-0677">Repeat</keyword>
<keyword id="KW-0915">Sodium</keyword>
<keyword id="KW-0894">Sodium channel</keyword>
<keyword id="KW-0739">Sodium transport</keyword>
<keyword id="KW-0812">Transmembrane</keyword>
<keyword id="KW-1133">Transmembrane helix</keyword>
<keyword id="KW-0813">Transport</keyword>
<keyword id="KW-0851">Voltage-gated channel</keyword>
<organism>
    <name type="scientific">Homo sapiens</name>
    <name type="common">Human</name>
    <dbReference type="NCBI Taxonomy" id="9606"/>
    <lineage>
        <taxon>Eukaryota</taxon>
        <taxon>Metazoa</taxon>
        <taxon>Chordata</taxon>
        <taxon>Craniata</taxon>
        <taxon>Vertebrata</taxon>
        <taxon>Euteleostomi</taxon>
        <taxon>Mammalia</taxon>
        <taxon>Eutheria</taxon>
        <taxon>Euarchontoglires</taxon>
        <taxon>Primates</taxon>
        <taxon>Haplorrhini</taxon>
        <taxon>Catarrhini</taxon>
        <taxon>Hominidae</taxon>
        <taxon>Homo</taxon>
    </lineage>
</organism>
<dbReference type="EMBL" id="AY141972">
    <property type="protein sequence ID" value="AAN10255.1"/>
    <property type="molecule type" value="mRNA"/>
</dbReference>
<dbReference type="EMBL" id="AL138707">
    <property type="status" value="NOT_ANNOTATED_CDS"/>
    <property type="molecule type" value="Genomic_DNA"/>
</dbReference>
<dbReference type="EMBL" id="AL354891">
    <property type="status" value="NOT_ANNOTATED_CDS"/>
    <property type="molecule type" value="Genomic_DNA"/>
</dbReference>
<dbReference type="EMBL" id="AL356778">
    <property type="status" value="NOT_ANNOTATED_CDS"/>
    <property type="molecule type" value="Genomic_DNA"/>
</dbReference>
<dbReference type="EMBL" id="CH471085">
    <property type="protein sequence ID" value="EAX09045.1"/>
    <property type="molecule type" value="Genomic_DNA"/>
</dbReference>
<dbReference type="EMBL" id="BC028390">
    <property type="protein sequence ID" value="AAH28390.1"/>
    <property type="molecule type" value="mRNA"/>
</dbReference>
<dbReference type="EMBL" id="BC064343">
    <property type="protein sequence ID" value="AAH64343.1"/>
    <property type="molecule type" value="mRNA"/>
</dbReference>
<dbReference type="EMBL" id="AE014293">
    <property type="protein sequence ID" value="AAN16023.1"/>
    <property type="molecule type" value="Genomic_DNA"/>
</dbReference>
<dbReference type="EMBL" id="AK172752">
    <property type="protein sequence ID" value="BAD18738.1"/>
    <property type="status" value="ALT_INIT"/>
    <property type="molecule type" value="mRNA"/>
</dbReference>
<dbReference type="CCDS" id="CCDS9498.1">
    <molecule id="Q8IZF0-1"/>
</dbReference>
<dbReference type="RefSeq" id="NP_001337678.1">
    <molecule id="Q8IZF0-1"/>
    <property type="nucleotide sequence ID" value="NM_001350749.2"/>
</dbReference>
<dbReference type="RefSeq" id="NP_443099.1">
    <molecule id="Q8IZF0-1"/>
    <property type="nucleotide sequence ID" value="NM_052867.4"/>
</dbReference>
<dbReference type="RefSeq" id="XP_011519370.1">
    <property type="nucleotide sequence ID" value="XM_011521068.2"/>
</dbReference>
<dbReference type="PDB" id="6XIW">
    <property type="method" value="EM"/>
    <property type="resolution" value="2.80 A"/>
    <property type="chains" value="A=1-1738"/>
</dbReference>
<dbReference type="PDB" id="7CM3">
    <property type="method" value="EM"/>
    <property type="resolution" value="3.10 A"/>
    <property type="chains" value="A=1-1738"/>
</dbReference>
<dbReference type="PDB" id="7SX3">
    <property type="method" value="EM"/>
    <property type="resolution" value="3.10 A"/>
    <property type="chains" value="A=1-1738"/>
</dbReference>
<dbReference type="PDB" id="7SX4">
    <property type="method" value="EM"/>
    <property type="resolution" value="3.50 A"/>
    <property type="chains" value="A=1-1738"/>
</dbReference>
<dbReference type="PDB" id="7WJI">
    <property type="method" value="EM"/>
    <property type="resolution" value="4.50 A"/>
    <property type="chains" value="C=1-1738"/>
</dbReference>
<dbReference type="PDBsum" id="6XIW"/>
<dbReference type="PDBsum" id="7CM3"/>
<dbReference type="PDBsum" id="7SX3"/>
<dbReference type="PDBsum" id="7SX4"/>
<dbReference type="PDBsum" id="7WJI"/>
<dbReference type="EMDB" id="EMD-22203"/>
<dbReference type="EMDB" id="EMD-30400"/>
<dbReference type="SMR" id="Q8IZF0"/>
<dbReference type="BioGRID" id="129228">
    <property type="interactions" value="5"/>
</dbReference>
<dbReference type="ComplexPortal" id="CPX-2341">
    <property type="entry name" value="NALCN channelosome complex"/>
</dbReference>
<dbReference type="CORUM" id="Q8IZF0"/>
<dbReference type="FunCoup" id="Q8IZF0">
    <property type="interactions" value="414"/>
</dbReference>
<dbReference type="IntAct" id="Q8IZF0">
    <property type="interactions" value="4"/>
</dbReference>
<dbReference type="MINT" id="Q8IZF0"/>
<dbReference type="STRING" id="9606.ENSP00000251127"/>
<dbReference type="GuidetoPHARMACOLOGY" id="750"/>
<dbReference type="TCDB" id="1.A.1.11.15">
    <property type="family name" value="the voltage-gated ion channel (vic) superfamily"/>
</dbReference>
<dbReference type="GlyCosmos" id="Q8IZF0">
    <property type="glycosylation" value="3 sites, No reported glycans"/>
</dbReference>
<dbReference type="GlyGen" id="Q8IZF0">
    <property type="glycosylation" value="5 sites, 1 N-linked glycan (1 site), 1 O-linked glycan (1 site)"/>
</dbReference>
<dbReference type="iPTMnet" id="Q8IZF0"/>
<dbReference type="PhosphoSitePlus" id="Q8IZF0"/>
<dbReference type="SwissPalm" id="Q8IZF0"/>
<dbReference type="BioMuta" id="NALCN"/>
<dbReference type="DMDM" id="74750791"/>
<dbReference type="jPOST" id="Q8IZF0"/>
<dbReference type="MassIVE" id="Q8IZF0"/>
<dbReference type="PaxDb" id="9606-ENSP00000251127"/>
<dbReference type="PeptideAtlas" id="Q8IZF0"/>
<dbReference type="ProteomicsDB" id="71335">
    <molecule id="Q8IZF0-1"/>
</dbReference>
<dbReference type="Antibodypedia" id="25282">
    <property type="antibodies" value="105 antibodies from 14 providers"/>
</dbReference>
<dbReference type="DNASU" id="259232"/>
<dbReference type="Ensembl" id="ENST00000251127.11">
    <molecule id="Q8IZF0-1"/>
    <property type="protein sequence ID" value="ENSP00000251127.6"/>
    <property type="gene ID" value="ENSG00000102452.18"/>
</dbReference>
<dbReference type="Ensembl" id="ENST00000376200.6">
    <molecule id="Q8IZF0-3"/>
    <property type="protein sequence ID" value="ENSP00000365373.5"/>
    <property type="gene ID" value="ENSG00000102452.18"/>
</dbReference>
<dbReference type="GeneID" id="259232"/>
<dbReference type="KEGG" id="hsa:259232"/>
<dbReference type="MANE-Select" id="ENST00000251127.11">
    <property type="protein sequence ID" value="ENSP00000251127.6"/>
    <property type="RefSeq nucleotide sequence ID" value="NM_052867.4"/>
    <property type="RefSeq protein sequence ID" value="NP_443099.1"/>
</dbReference>
<dbReference type="UCSC" id="uc001vox.2">
    <molecule id="Q8IZF0-1"/>
    <property type="organism name" value="human"/>
</dbReference>
<dbReference type="AGR" id="HGNC:19082"/>
<dbReference type="CTD" id="259232"/>
<dbReference type="DisGeNET" id="259232"/>
<dbReference type="GeneCards" id="NALCN"/>
<dbReference type="HGNC" id="HGNC:19082">
    <property type="gene designation" value="NALCN"/>
</dbReference>
<dbReference type="HPA" id="ENSG00000102452">
    <property type="expression patterns" value="Tissue enhanced (brain)"/>
</dbReference>
<dbReference type="MalaCards" id="NALCN"/>
<dbReference type="MIM" id="611549">
    <property type="type" value="gene"/>
</dbReference>
<dbReference type="MIM" id="615419">
    <property type="type" value="phenotype"/>
</dbReference>
<dbReference type="MIM" id="616266">
    <property type="type" value="phenotype"/>
</dbReference>
<dbReference type="neXtProt" id="NX_Q8IZF0"/>
<dbReference type="OpenTargets" id="ENSG00000102452"/>
<dbReference type="Orphanet" id="562528">
    <property type="disease" value="Congenital limbs-face contractures-hypotonia-developmental delay syndrome"/>
</dbReference>
<dbReference type="Orphanet" id="1146">
    <property type="disease" value="Distal arthrogryposis type 1"/>
</dbReference>
<dbReference type="Orphanet" id="2053">
    <property type="disease" value="Freeman-Sheldon syndrome"/>
</dbReference>
<dbReference type="Orphanet" id="371364">
    <property type="disease" value="Hypotonia-speech impairment-severe cognitive delay syndrome"/>
</dbReference>
<dbReference type="Orphanet" id="1147">
    <property type="disease" value="Sheldon-Hall syndrome"/>
</dbReference>
<dbReference type="PharmGKB" id="PA162396840"/>
<dbReference type="VEuPathDB" id="HostDB:ENSG00000102452"/>
<dbReference type="eggNOG" id="KOG2301">
    <property type="taxonomic scope" value="Eukaryota"/>
</dbReference>
<dbReference type="GeneTree" id="ENSGT00940000156023"/>
<dbReference type="HOGENOM" id="CLU_000984_0_0_1"/>
<dbReference type="InParanoid" id="Q8IZF0"/>
<dbReference type="OMA" id="TLFIAWN"/>
<dbReference type="OrthoDB" id="10069766at2759"/>
<dbReference type="PAN-GO" id="Q8IZF0">
    <property type="GO annotations" value="4 GO annotations based on evolutionary models"/>
</dbReference>
<dbReference type="PhylomeDB" id="Q8IZF0"/>
<dbReference type="TreeFam" id="TF312843"/>
<dbReference type="PathwayCommons" id="Q8IZF0"/>
<dbReference type="Reactome" id="R-HSA-2672351">
    <property type="pathway name" value="Stimuli-sensing channels"/>
</dbReference>
<dbReference type="SignaLink" id="Q8IZF0"/>
<dbReference type="SIGNOR" id="Q8IZF0"/>
<dbReference type="BioGRID-ORCS" id="259232">
    <property type="hits" value="6 hits in 1147 CRISPR screens"/>
</dbReference>
<dbReference type="ChiTaRS" id="NALCN">
    <property type="organism name" value="human"/>
</dbReference>
<dbReference type="GenomeRNAi" id="259232"/>
<dbReference type="Pharos" id="Q8IZF0">
    <property type="development level" value="Tchem"/>
</dbReference>
<dbReference type="PRO" id="PR:Q8IZF0"/>
<dbReference type="Proteomes" id="UP000005640">
    <property type="component" value="Chromosome 13"/>
</dbReference>
<dbReference type="RNAct" id="Q8IZF0">
    <property type="molecule type" value="protein"/>
</dbReference>
<dbReference type="Bgee" id="ENSG00000102452">
    <property type="expression patterns" value="Expressed in middle temporal gyrus and 143 other cell types or tissues"/>
</dbReference>
<dbReference type="ExpressionAtlas" id="Q8IZF0">
    <property type="expression patterns" value="baseline and differential"/>
</dbReference>
<dbReference type="GO" id="GO:0034702">
    <property type="term" value="C:monoatomic ion channel complex"/>
    <property type="evidence" value="ECO:0007669"/>
    <property type="project" value="UniProtKB-KW"/>
</dbReference>
<dbReference type="GO" id="GO:0005886">
    <property type="term" value="C:plasma membrane"/>
    <property type="evidence" value="ECO:0000314"/>
    <property type="project" value="UniProtKB"/>
</dbReference>
<dbReference type="GO" id="GO:0022840">
    <property type="term" value="F:leak channel activity"/>
    <property type="evidence" value="ECO:0000250"/>
    <property type="project" value="UniProtKB"/>
</dbReference>
<dbReference type="GO" id="GO:0005261">
    <property type="term" value="F:monoatomic cation channel activity"/>
    <property type="evidence" value="ECO:0000250"/>
    <property type="project" value="UniProtKB"/>
</dbReference>
<dbReference type="GO" id="GO:0005272">
    <property type="term" value="F:sodium channel activity"/>
    <property type="evidence" value="ECO:0000304"/>
    <property type="project" value="Reactome"/>
</dbReference>
<dbReference type="GO" id="GO:0005248">
    <property type="term" value="F:voltage-gated sodium channel activity"/>
    <property type="evidence" value="ECO:0000314"/>
    <property type="project" value="UniProtKB"/>
</dbReference>
<dbReference type="GO" id="GO:0070588">
    <property type="term" value="P:calcium ion transmembrane transport"/>
    <property type="evidence" value="ECO:0000250"/>
    <property type="project" value="UniProtKB"/>
</dbReference>
<dbReference type="GO" id="GO:0034220">
    <property type="term" value="P:monoatomic ion transmembrane transport"/>
    <property type="evidence" value="ECO:0000304"/>
    <property type="project" value="Reactome"/>
</dbReference>
<dbReference type="GO" id="GO:0032224">
    <property type="term" value="P:positive regulation of synaptic transmission, cholinergic"/>
    <property type="evidence" value="ECO:0000318"/>
    <property type="project" value="GO_Central"/>
</dbReference>
<dbReference type="GO" id="GO:0032230">
    <property type="term" value="P:positive regulation of synaptic transmission, GABAergic"/>
    <property type="evidence" value="ECO:0000318"/>
    <property type="project" value="GO_Central"/>
</dbReference>
<dbReference type="GO" id="GO:0071805">
    <property type="term" value="P:potassium ion transmembrane transport"/>
    <property type="evidence" value="ECO:0000250"/>
    <property type="project" value="UniProtKB"/>
</dbReference>
<dbReference type="GO" id="GO:0060075">
    <property type="term" value="P:regulation of resting membrane potential"/>
    <property type="evidence" value="ECO:0000250"/>
    <property type="project" value="UniProtKB"/>
</dbReference>
<dbReference type="GO" id="GO:0035725">
    <property type="term" value="P:sodium ion transmembrane transport"/>
    <property type="evidence" value="ECO:0000250"/>
    <property type="project" value="UniProtKB"/>
</dbReference>
<dbReference type="FunFam" id="1.10.238.10:FF:000080">
    <property type="entry name" value="Sodium leak channel non-selective protein"/>
    <property type="match status" value="1"/>
</dbReference>
<dbReference type="FunFam" id="1.10.287.70:FF:000060">
    <property type="entry name" value="Sodium leak channel non-selective protein"/>
    <property type="match status" value="1"/>
</dbReference>
<dbReference type="FunFam" id="1.10.287.70:FF:000061">
    <property type="entry name" value="Sodium leak channel non-selective protein"/>
    <property type="match status" value="1"/>
</dbReference>
<dbReference type="FunFam" id="1.10.287.70:FF:000066">
    <property type="entry name" value="Sodium leak channel non-selective protein"/>
    <property type="match status" value="1"/>
</dbReference>
<dbReference type="FunFam" id="1.20.120.350:FF:000032">
    <property type="entry name" value="Sodium leak channel non-selective protein"/>
    <property type="match status" value="1"/>
</dbReference>
<dbReference type="FunFam" id="1.20.120.350:FF:000034">
    <property type="entry name" value="Sodium leak channel non-selective protein"/>
    <property type="match status" value="1"/>
</dbReference>
<dbReference type="FunFam" id="1.20.120.350:FF:000038">
    <property type="entry name" value="Sodium leak channel non-selective protein"/>
    <property type="match status" value="1"/>
</dbReference>
<dbReference type="FunFam" id="1.10.287.70:FF:000065">
    <property type="entry name" value="sodium leak channel non-selective protein"/>
    <property type="match status" value="1"/>
</dbReference>
<dbReference type="FunFam" id="1.20.120.350:FF:000030">
    <property type="entry name" value="sodium leak channel non-selective protein"/>
    <property type="match status" value="1"/>
</dbReference>
<dbReference type="Gene3D" id="1.10.287.70">
    <property type="match status" value="4"/>
</dbReference>
<dbReference type="Gene3D" id="1.10.238.10">
    <property type="entry name" value="EF-hand"/>
    <property type="match status" value="1"/>
</dbReference>
<dbReference type="Gene3D" id="1.20.120.350">
    <property type="entry name" value="Voltage-gated potassium channels. Chain C"/>
    <property type="match status" value="4"/>
</dbReference>
<dbReference type="InterPro" id="IPR005821">
    <property type="entry name" value="Ion_trans_dom"/>
</dbReference>
<dbReference type="InterPro" id="IPR028823">
    <property type="entry name" value="NALCN"/>
</dbReference>
<dbReference type="InterPro" id="IPR027359">
    <property type="entry name" value="Volt_channel_dom_sf"/>
</dbReference>
<dbReference type="PANTHER" id="PTHR46141:SF1">
    <property type="entry name" value="SODIUM LEAK CHANNEL NALCN"/>
    <property type="match status" value="1"/>
</dbReference>
<dbReference type="PANTHER" id="PTHR46141">
    <property type="entry name" value="SODIUM LEAK CHANNEL NON-SELECTIVE PROTEIN"/>
    <property type="match status" value="1"/>
</dbReference>
<dbReference type="Pfam" id="PF00520">
    <property type="entry name" value="Ion_trans"/>
    <property type="match status" value="4"/>
</dbReference>
<dbReference type="SUPFAM" id="SSF81324">
    <property type="entry name" value="Voltage-gated potassium channels"/>
    <property type="match status" value="4"/>
</dbReference>
<name>NALCN_HUMAN</name>
<comment type="function">
    <text evidence="1 4 11 12 14">Voltage-gated ion channel responsible for the resting Na(+) permeability that controls neuronal excitability (PubMed:17448995, PubMed:31409833). NALCN channel functions as a multi-protein complex, which consists at least of NALCN, NALF1, UNC79 and UNC80 (PubMed:32494638, PubMed:33203861). NALCN is the voltage-sensing, pore-forming subunit of the NALCN channel complex (PubMed:17448995). NALCN channel complex is constitutively active and conducts monovalent cations but is blocked by physiological concentrations of extracellular divalent cations (PubMed:32494638). In addition to its role in regulating neuronal excitability, is required for normal respiratory rhythm, systemic osmoregulation by controlling the serum sodium concentration and in the regulation of the intestinal pace-making activity in the interstitial cells of Cajal (By similarity). NALCN channel is also activated by neuropeptides such as neurotensin and substance P (SP) through a SRC family kinases-dependent pathway (By similarity). In addition, NALCN activity is enhanced/modulated by several GPCRs, such as CHRM3 (By similarity).</text>
</comment>
<comment type="catalytic activity">
    <reaction evidence="14">
        <text>Na(+)(in) = Na(+)(out)</text>
        <dbReference type="Rhea" id="RHEA:34963"/>
        <dbReference type="ChEBI" id="CHEBI:29101"/>
    </reaction>
</comment>
<comment type="activity regulation">
    <text evidence="12 14">Inhibited by low micromolar concentrations of Gd(3+) and high micromolar concentrations of verapamil. Insensitive to tetrodotoxin (TTX) and potentiated by low external Ca(2+) concentration.</text>
</comment>
<comment type="subunit">
    <text evidence="1 12 13 14">Found in a complex with NALCN, UNC79, UNC80 and NACL1; these auxiliary subunits are indispensable for the function of NALCN channel (PubMed:32494638, PubMed:32698188, PubMed:33203861). Interacts with UNC80; required for the NALCN activation/inhibition by GPCRs in neurons. Found in a complex with NALCN, UNC79 and UNC80; UNC80 bridges NALCN to UNC79 (By similarity). Interacts with CHRM3 (By similarity).</text>
</comment>
<comment type="interaction">
    <interactant intactId="EBI-7085333">
        <id>Q8IZF0</id>
    </interactant>
    <interactant intactId="EBI-2687785">
        <id>P20309</id>
        <label>CHRM3</label>
    </interactant>
    <organismsDiffer>false</organismsDiffer>
    <experiments>3</experiments>
</comment>
<comment type="interaction">
    <interactant intactId="EBI-7085333">
        <id>Q8IZF0</id>
    </interactant>
    <interactant intactId="EBI-748397">
        <id>P50222</id>
        <label>MEOX2</label>
    </interactant>
    <organismsDiffer>false</organismsDiffer>
    <experiments>3</experiments>
</comment>
<comment type="subcellular location">
    <subcellularLocation>
        <location evidence="11 12 13">Cell membrane</location>
        <topology evidence="2">Multi-pass membrane protein</topology>
    </subcellularLocation>
</comment>
<comment type="alternative products">
    <event type="alternative splicing"/>
    <isoform>
        <id>Q8IZF0-1</id>
        <name>1</name>
        <sequence type="displayed"/>
    </isoform>
    <isoform>
        <id>Q8IZF0-2</id>
        <name>2</name>
        <sequence type="described" ref="VSP_030190 VSP_030191"/>
    </isoform>
    <isoform>
        <id>Q8IZF0-3</id>
        <name>3</name>
        <sequence type="described" ref="VSP_030188 VSP_030189"/>
    </isoform>
</comment>
<comment type="domain">
    <text evidence="1">Contains 24 transmembrane helices (TM) that form four homologous functional repeats connected by intracellular linkers. Each of the four internal repeats contains five hydrophobic transmembrane segments (S1, S2, S3, S5, S6) and one positively charged transmembrane segment (S4). S4 segments represent the voltage-sensor. S4 transmembrane segments lack some of the charged residues (K and R) found at every third position in the S4s of the NaV, CaV, and KV channels. Pore-forming loops (P loops) between S5 and S6 of each domain form an EEKE sodium- ion selectivity filter a mixture between the EEEE found in the CaVs and the DEKA of NaVs. Voltage-sensing domains (VSDs), formed by S1 to S4 of each domain, detect changes in membrane potential and induce the opening or closing of the ion-conducting pore domain, formed by S5 and S6.</text>
</comment>
<comment type="PTM">
    <text evidence="1">Phosphorylated on tyrosine residues.</text>
</comment>
<comment type="disease" evidence="5 6 11 13">
    <disease id="DI-03902">
        <name>Hypotonia, infantile, with psychomotor retardation and characteristic facies 1</name>
        <acronym>IHPRF1</acronym>
        <description>A neurodegenerative disease characterized by variable degrees of hypotonia, speech impairment, intellectual disability, pyramidal signs, subtle facial dysmorphism, and chronic constipation. Some patients manifest neuroaxonal dystrophy, optic atrophy, unmyelinated axons and spheroid bodies in tissue biopsies.</description>
        <dbReference type="MIM" id="615419"/>
    </disease>
    <text>The disease is caused by variants affecting the gene represented in this entry.</text>
</comment>
<comment type="disease" evidence="7 8 11 13">
    <disease id="DI-04355">
        <name>Congenital contractures of the limbs and face, hypotonia, and developmental delay</name>
        <acronym>CLIFAHDD</acronym>
        <description>A disease characterized by congenital contractures of the limbs and face, resulting in characteristic facial features, abnormal tone, most commonly manifested as hypotonia, and variable degrees of developmental delay.</description>
        <dbReference type="MIM" id="616266"/>
    </disease>
    <text>The disease is caused by variants affecting the gene represented in this entry.</text>
</comment>
<comment type="similarity">
    <text evidence="17">Belongs to the NALCN family.</text>
</comment>
<comment type="caution">
    <text evidence="4 11 12">NALCN was also originally reported to be a voltage-independent, cation-nonselective channel which is permeable to sodium, potassium and calcium ions (PubMed:17448995). However, NALCN is recently reported to be selective only for monovalent cations and to be blocked by extracellular divalent cations (PubMed:32494638). Futhemore, coexpression of NALCN, UNC79, UNC80, and NALF1 results in voltage-dependent NALCN currents (PubMed:31409833, PubMed:32494638).</text>
</comment>
<comment type="sequence caution" evidence="17">
    <conflict type="erroneous initiation">
        <sequence resource="EMBL-CDS" id="BAD18738"/>
    </conflict>
    <text>Truncated N-terminus.</text>
</comment>
<sequence length="1738" mass="200331">MLKRKQSSRVEAQPVTDFGPDESLSDNADILWINKPWVHSLLRICAIISVISVCMNTPMTFEHYPPLQYVTFTLDTLLMFLYTAEMIAKMHIRGIVKGDSSYVKDRWCVFDGFMVFCLWVSLVLQVFEIADIVDQMSPWGMLRIPRPLIMIRAFRIYFRFELPRTRITNILKRSGEQIWSVSIFLLFFLLLYGILGVQMFGTFTYHCVVNDTKPGNVTWNSLAIPDTHCSPELEEGYQCPPGFKCMDLEDLGLSRQELGYSGFNEIGTSIFTVYEAASQEGWVFLMYRAIDSFPRWRSYFYFITLIFFLAWLVKNVFIAVIIETFAEIRVQFQQMWGSRSSTTSTATTQMFHEDAAGGWQLVAVDVNKPQGRAPACLQKMMRSSVFHMFILSMVTVDVIVAASNYYKGENFRRQYDEFYLAEVAFTVLFDLEALLKIWCLGFTGYISSSLHKFELLLVIGTTLHVYPDLYHSQFTYFQVLRVVRLIKISPALEDFVYKIFGPGKKLGSLVVFTASLLIVMSAISLQMFCFVEELDRFTTFPRAFMSMFQILTQEGWVDVMDQTLNAVGHMWAPVVAIYFILYHLFATLILLSLFVAVILDNLELDEDLKKLKQLKQSEANADTKEKLPLRLRIFEKFPNRPQMVKISKLPSDFTVPKIRESFMKQFIDRQQQDTCCLLRSLPTTSSSSCDHSKRSAIEDNKYIDQKLRKSVFSIRARNLLEKETAVTKILRACTRQRMLSGSFEGQPAKERSILSVQHHIRQERRSLRHGSNSQRISRGKSLETLTQDHSNTVRYRNAQREDSEIKMIQEKKEQAEMKRKVQEEELRENHPYFDKPLFIVGREHRFRNFCRVVVRARFNASKTDPVTGAVKNTKYHQLYDLLGLVTYLDWVMIIVTICSCISMMFESPFRRVMHAPTLQIAEYVFVIFMSIELNLKIMADGLFFTPTAVIRDFGGVMDIFIYLVSLIFLCWMPQNVPAESGAQLLMVLRCLRPLRIFKLVPQMRKVVRELFSGFKEIFLVSILLLTLMLVFASFGVQLFAGKLAKCNDPNIIRREDCNGIFRINVSVSKNLNLKLRPGEKKPGFWVPRVWANPRNFNFDNVGNAMLALFEVLSLKGWVEVRDVIIHRVGPIHGIYIHVFVFLGCMIGLTLFVGVVIANFNENKGTALLTVDQRRWEDLKSRLKIAQPLHLPPRPDNDGFRAKMYDITQHPFFKRTIALLVLAQSVLLSVKWDVEDPVTVPLATMSVVFTFIFVLEVTMKIIAMSPAGFWQSRRNRYDLLVTSLGVVWVVLHFALLNAYTYMMGACVIVFRFFSICGKHVTLKMLLLTVVVSMYKSFFIIVGMFLLLLCYAFAGVVLFGTVKYGENINRHANFSSAGKAITVLFRIVTGEDWNKIMHDCMVQPPFCTPDEFTYWATDCGNYAGALMYFCSFYVIIAYIMLNLLVAIIVENFSLFYSTEEDQLLSYNDLRHFQIIWNMVDDKREGVIPTFRVKFLLRLLRGRLEVDLDKDKLLFKHMCYEMERLHNGGDVTFHDVLSMLSYRSVDIRKSLQLEELLAREQLEYTIEEEVAKQTIRMWLKKCLKRIRAKQQQSCSIIHSLRESQQQELSRFLNPPSIETTQPSEDTNANSQDNSMQPETSSQQQLLSPTLSDRGGSRQDAADAGKPQRKFGQWRLPSAPKPISHSVSSVNLRFGGRTTMKSVVCKMNPMTDAASCGSEVKKWWTRQLTVESDESGDDLLDI</sequence>
<reference key="1">
    <citation type="submission" date="2002-08" db="EMBL/GenBank/DDBJ databases">
        <title>VGCNL1, a putative voltage-gated ion channel.</title>
        <authorList>
            <person name="Bonner T.I."/>
            <person name="Moses T."/>
            <person name="Detera-Wadleigh S."/>
        </authorList>
    </citation>
    <scope>NUCLEOTIDE SEQUENCE [MRNA] (ISOFORM 1)</scope>
    <source>
        <tissue>Brain</tissue>
    </source>
</reference>
<reference key="2">
    <citation type="journal article" date="2004" name="Nature">
        <title>The DNA sequence and analysis of human chromosome 13.</title>
        <authorList>
            <person name="Dunham A."/>
            <person name="Matthews L.H."/>
            <person name="Burton J."/>
            <person name="Ashurst J.L."/>
            <person name="Howe K.L."/>
            <person name="Ashcroft K.J."/>
            <person name="Beare D.M."/>
            <person name="Burford D.C."/>
            <person name="Hunt S.E."/>
            <person name="Griffiths-Jones S."/>
            <person name="Jones M.C."/>
            <person name="Keenan S.J."/>
            <person name="Oliver K."/>
            <person name="Scott C.E."/>
            <person name="Ainscough R."/>
            <person name="Almeida J.P."/>
            <person name="Ambrose K.D."/>
            <person name="Andrews D.T."/>
            <person name="Ashwell R.I.S."/>
            <person name="Babbage A.K."/>
            <person name="Bagguley C.L."/>
            <person name="Bailey J."/>
            <person name="Bannerjee R."/>
            <person name="Barlow K.F."/>
            <person name="Bates K."/>
            <person name="Beasley H."/>
            <person name="Bird C.P."/>
            <person name="Bray-Allen S."/>
            <person name="Brown A.J."/>
            <person name="Brown J.Y."/>
            <person name="Burrill W."/>
            <person name="Carder C."/>
            <person name="Carter N.P."/>
            <person name="Chapman J.C."/>
            <person name="Clamp M.E."/>
            <person name="Clark S.Y."/>
            <person name="Clarke G."/>
            <person name="Clee C.M."/>
            <person name="Clegg S.C."/>
            <person name="Cobley V."/>
            <person name="Collins J.E."/>
            <person name="Corby N."/>
            <person name="Coville G.J."/>
            <person name="Deloukas P."/>
            <person name="Dhami P."/>
            <person name="Dunham I."/>
            <person name="Dunn M."/>
            <person name="Earthrowl M.E."/>
            <person name="Ellington A.G."/>
            <person name="Faulkner L."/>
            <person name="Frankish A.G."/>
            <person name="Frankland J."/>
            <person name="French L."/>
            <person name="Garner P."/>
            <person name="Garnett J."/>
            <person name="Gilbert J.G.R."/>
            <person name="Gilson C.J."/>
            <person name="Ghori J."/>
            <person name="Grafham D.V."/>
            <person name="Gribble S.M."/>
            <person name="Griffiths C."/>
            <person name="Hall R.E."/>
            <person name="Hammond S."/>
            <person name="Harley J.L."/>
            <person name="Hart E.A."/>
            <person name="Heath P.D."/>
            <person name="Howden P.J."/>
            <person name="Huckle E.J."/>
            <person name="Hunt P.J."/>
            <person name="Hunt A.R."/>
            <person name="Johnson C."/>
            <person name="Johnson D."/>
            <person name="Kay M."/>
            <person name="Kimberley A.M."/>
            <person name="King A."/>
            <person name="Laird G.K."/>
            <person name="Langford C.J."/>
            <person name="Lawlor S."/>
            <person name="Leongamornlert D.A."/>
            <person name="Lloyd D.M."/>
            <person name="Lloyd C."/>
            <person name="Loveland J.E."/>
            <person name="Lovell J."/>
            <person name="Martin S."/>
            <person name="Mashreghi-Mohammadi M."/>
            <person name="McLaren S.J."/>
            <person name="McMurray A."/>
            <person name="Milne S."/>
            <person name="Moore M.J.F."/>
            <person name="Nickerson T."/>
            <person name="Palmer S.A."/>
            <person name="Pearce A.V."/>
            <person name="Peck A.I."/>
            <person name="Pelan S."/>
            <person name="Phillimore B."/>
            <person name="Porter K.M."/>
            <person name="Rice C.M."/>
            <person name="Searle S."/>
            <person name="Sehra H.K."/>
            <person name="Shownkeen R."/>
            <person name="Skuce C.D."/>
            <person name="Smith M."/>
            <person name="Steward C.A."/>
            <person name="Sycamore N."/>
            <person name="Tester J."/>
            <person name="Thomas D.W."/>
            <person name="Tracey A."/>
            <person name="Tromans A."/>
            <person name="Tubby B."/>
            <person name="Wall M."/>
            <person name="Wallis J.M."/>
            <person name="West A.P."/>
            <person name="Whitehead S.L."/>
            <person name="Willey D.L."/>
            <person name="Wilming L."/>
            <person name="Wray P.W."/>
            <person name="Wright M.W."/>
            <person name="Young L."/>
            <person name="Coulson A."/>
            <person name="Durbin R.M."/>
            <person name="Hubbard T."/>
            <person name="Sulston J.E."/>
            <person name="Beck S."/>
            <person name="Bentley D.R."/>
            <person name="Rogers J."/>
            <person name="Ross M.T."/>
        </authorList>
    </citation>
    <scope>NUCLEOTIDE SEQUENCE [LARGE SCALE GENOMIC DNA]</scope>
</reference>
<reference key="3">
    <citation type="submission" date="2005-07" db="EMBL/GenBank/DDBJ databases">
        <authorList>
            <person name="Mural R.J."/>
            <person name="Istrail S."/>
            <person name="Sutton G.G."/>
            <person name="Florea L."/>
            <person name="Halpern A.L."/>
            <person name="Mobarry C.M."/>
            <person name="Lippert R."/>
            <person name="Walenz B."/>
            <person name="Shatkay H."/>
            <person name="Dew I."/>
            <person name="Miller J.R."/>
            <person name="Flanigan M.J."/>
            <person name="Edwards N.J."/>
            <person name="Bolanos R."/>
            <person name="Fasulo D."/>
            <person name="Halldorsson B.V."/>
            <person name="Hannenhalli S."/>
            <person name="Turner R."/>
            <person name="Yooseph S."/>
            <person name="Lu F."/>
            <person name="Nusskern D.R."/>
            <person name="Shue B.C."/>
            <person name="Zheng X.H."/>
            <person name="Zhong F."/>
            <person name="Delcher A.L."/>
            <person name="Huson D.H."/>
            <person name="Kravitz S.A."/>
            <person name="Mouchard L."/>
            <person name="Reinert K."/>
            <person name="Remington K.A."/>
            <person name="Clark A.G."/>
            <person name="Waterman M.S."/>
            <person name="Eichler E.E."/>
            <person name="Adams M.D."/>
            <person name="Hunkapiller M.W."/>
            <person name="Myers E.W."/>
            <person name="Venter J.C."/>
        </authorList>
    </citation>
    <scope>NUCLEOTIDE SEQUENCE [LARGE SCALE GENOMIC DNA]</scope>
</reference>
<reference key="4">
    <citation type="journal article" date="2004" name="Genome Res.">
        <title>The status, quality, and expansion of the NIH full-length cDNA project: the Mammalian Gene Collection (MGC).</title>
        <authorList>
            <consortium name="The MGC Project Team"/>
        </authorList>
    </citation>
    <scope>NUCLEOTIDE SEQUENCE [LARGE SCALE MRNA] (ISOFORMS 2 AND 3)</scope>
    <source>
        <tissue>Bone</tissue>
        <tissue>Brain</tissue>
    </source>
</reference>
<reference key="5">
    <citation type="journal article" date="2002" name="Proc. Natl. Acad. Sci. U.S.A.">
        <title>Genetic and physiological data implicating the new human gene G72 and the gene for D-amino acid oxidase in schizophrenia.</title>
        <authorList>
            <person name="Chumakov I."/>
            <person name="Blumenfeld M."/>
            <person name="Guerassimenko O."/>
            <person name="Cavarec L."/>
            <person name="Palicio M."/>
            <person name="Abderrahim H."/>
            <person name="Bougueleret L."/>
            <person name="Barry C."/>
            <person name="Tanaka H."/>
            <person name="La Rosa P."/>
            <person name="Puech A."/>
            <person name="Tahri N."/>
            <person name="Cohen-Akenine A."/>
            <person name="Delabrosse S."/>
            <person name="Lissarrague S."/>
            <person name="Picard F.-P."/>
            <person name="Maurice K."/>
            <person name="Essioux L."/>
            <person name="Millasseau P."/>
            <person name="Grel P."/>
            <person name="Debailleul V."/>
            <person name="Simon A.-M."/>
            <person name="Caterina D."/>
            <person name="Dufaure I."/>
            <person name="Malekzadeh K."/>
            <person name="Belova M."/>
            <person name="Luan J.-J."/>
            <person name="Bouillot M."/>
            <person name="Sambucy J.-L."/>
            <person name="Primas G."/>
            <person name="Saumier M."/>
            <person name="Boubkiri N."/>
            <person name="Martin-Saumier S."/>
            <person name="Nasroune M."/>
            <person name="Peixoto H."/>
            <person name="Delaye A."/>
            <person name="Pinchot V."/>
            <person name="Bastucci M."/>
            <person name="Guillou S."/>
            <person name="Chevillon M."/>
            <person name="Sainz-Fuertes R."/>
            <person name="Meguenni S."/>
            <person name="Aurich-Costa J."/>
            <person name="Cherif D."/>
            <person name="Gimalac A."/>
            <person name="Van Duijn C."/>
            <person name="Gauvreau D."/>
            <person name="Ouellette G."/>
            <person name="Fortier I."/>
            <person name="Raelson J."/>
            <person name="Sherbatich T."/>
            <person name="Riazanskay N."/>
            <person name="Rogaev E."/>
            <person name="Raeymaekers P."/>
            <person name="Aerssens J."/>
            <person name="Konings F."/>
            <person name="Luyten W."/>
            <person name="Macciardi F."/>
            <person name="Sham P.C."/>
            <person name="Straub R.E."/>
            <person name="Weinberger D.R."/>
            <person name="Cohen N."/>
            <person name="Cohen D."/>
        </authorList>
    </citation>
    <scope>NUCLEOTIDE SEQUENCE [GENOMIC DNA] OF 1-266</scope>
</reference>
<reference key="6">
    <citation type="journal article" date="2004" name="Nat. Genet.">
        <title>Complete sequencing and characterization of 21,243 full-length human cDNAs.</title>
        <authorList>
            <person name="Ota T."/>
            <person name="Suzuki Y."/>
            <person name="Nishikawa T."/>
            <person name="Otsuki T."/>
            <person name="Sugiyama T."/>
            <person name="Irie R."/>
            <person name="Wakamatsu A."/>
            <person name="Hayashi K."/>
            <person name="Sato H."/>
            <person name="Nagai K."/>
            <person name="Kimura K."/>
            <person name="Makita H."/>
            <person name="Sekine M."/>
            <person name="Obayashi M."/>
            <person name="Nishi T."/>
            <person name="Shibahara T."/>
            <person name="Tanaka T."/>
            <person name="Ishii S."/>
            <person name="Yamamoto J."/>
            <person name="Saito K."/>
            <person name="Kawai Y."/>
            <person name="Isono Y."/>
            <person name="Nakamura Y."/>
            <person name="Nagahari K."/>
            <person name="Murakami K."/>
            <person name="Yasuda T."/>
            <person name="Iwayanagi T."/>
            <person name="Wagatsuma M."/>
            <person name="Shiratori A."/>
            <person name="Sudo H."/>
            <person name="Hosoiri T."/>
            <person name="Kaku Y."/>
            <person name="Kodaira H."/>
            <person name="Kondo H."/>
            <person name="Sugawara M."/>
            <person name="Takahashi M."/>
            <person name="Kanda K."/>
            <person name="Yokoi T."/>
            <person name="Furuya T."/>
            <person name="Kikkawa E."/>
            <person name="Omura Y."/>
            <person name="Abe K."/>
            <person name="Kamihara K."/>
            <person name="Katsuta N."/>
            <person name="Sato K."/>
            <person name="Tanikawa M."/>
            <person name="Yamazaki M."/>
            <person name="Ninomiya K."/>
            <person name="Ishibashi T."/>
            <person name="Yamashita H."/>
            <person name="Murakawa K."/>
            <person name="Fujimori K."/>
            <person name="Tanai H."/>
            <person name="Kimata M."/>
            <person name="Watanabe M."/>
            <person name="Hiraoka S."/>
            <person name="Chiba Y."/>
            <person name="Ishida S."/>
            <person name="Ono Y."/>
            <person name="Takiguchi S."/>
            <person name="Watanabe S."/>
            <person name="Yosida M."/>
            <person name="Hotuta T."/>
            <person name="Kusano J."/>
            <person name="Kanehori K."/>
            <person name="Takahashi-Fujii A."/>
            <person name="Hara H."/>
            <person name="Tanase T.-O."/>
            <person name="Nomura Y."/>
            <person name="Togiya S."/>
            <person name="Komai F."/>
            <person name="Hara R."/>
            <person name="Takeuchi K."/>
            <person name="Arita M."/>
            <person name="Imose N."/>
            <person name="Musashino K."/>
            <person name="Yuuki H."/>
            <person name="Oshima A."/>
            <person name="Sasaki N."/>
            <person name="Aotsuka S."/>
            <person name="Yoshikawa Y."/>
            <person name="Matsunawa H."/>
            <person name="Ichihara T."/>
            <person name="Shiohata N."/>
            <person name="Sano S."/>
            <person name="Moriya S."/>
            <person name="Momiyama H."/>
            <person name="Satoh N."/>
            <person name="Takami S."/>
            <person name="Terashima Y."/>
            <person name="Suzuki O."/>
            <person name="Nakagawa S."/>
            <person name="Senoh A."/>
            <person name="Mizoguchi H."/>
            <person name="Goto Y."/>
            <person name="Shimizu F."/>
            <person name="Wakebe H."/>
            <person name="Hishigaki H."/>
            <person name="Watanabe T."/>
            <person name="Sugiyama A."/>
            <person name="Takemoto M."/>
            <person name="Kawakami B."/>
            <person name="Yamazaki M."/>
            <person name="Watanabe K."/>
            <person name="Kumagai A."/>
            <person name="Itakura S."/>
            <person name="Fukuzumi Y."/>
            <person name="Fujimori Y."/>
            <person name="Komiyama M."/>
            <person name="Tashiro H."/>
            <person name="Tanigami A."/>
            <person name="Fujiwara T."/>
            <person name="Ono T."/>
            <person name="Yamada K."/>
            <person name="Fujii Y."/>
            <person name="Ozaki K."/>
            <person name="Hirao M."/>
            <person name="Ohmori Y."/>
            <person name="Kawabata A."/>
            <person name="Hikiji T."/>
            <person name="Kobatake N."/>
            <person name="Inagaki H."/>
            <person name="Ikema Y."/>
            <person name="Okamoto S."/>
            <person name="Okitani R."/>
            <person name="Kawakami T."/>
            <person name="Noguchi S."/>
            <person name="Itoh T."/>
            <person name="Shigeta K."/>
            <person name="Senba T."/>
            <person name="Matsumura K."/>
            <person name="Nakajima Y."/>
            <person name="Mizuno T."/>
            <person name="Morinaga M."/>
            <person name="Sasaki M."/>
            <person name="Togashi T."/>
            <person name="Oyama M."/>
            <person name="Hata H."/>
            <person name="Watanabe M."/>
            <person name="Komatsu T."/>
            <person name="Mizushima-Sugano J."/>
            <person name="Satoh T."/>
            <person name="Shirai Y."/>
            <person name="Takahashi Y."/>
            <person name="Nakagawa K."/>
            <person name="Okumura K."/>
            <person name="Nagase T."/>
            <person name="Nomura N."/>
            <person name="Kikuchi H."/>
            <person name="Masuho Y."/>
            <person name="Yamashita R."/>
            <person name="Nakai K."/>
            <person name="Yada T."/>
            <person name="Nakamura Y."/>
            <person name="Ohara O."/>
            <person name="Isogai T."/>
            <person name="Sugano S."/>
        </authorList>
    </citation>
    <scope>NUCLEOTIDE SEQUENCE [LARGE SCALE MRNA] OF 1428-1738</scope>
</reference>
<reference key="7">
    <citation type="journal article" date="2007" name="Cell">
        <title>The neuronal channel NALCN contributes resting sodium permeability and is required for normal respiratory rhythm.</title>
        <authorList>
            <person name="Lu B."/>
            <person name="Su Y."/>
            <person name="Das S."/>
            <person name="Liu J."/>
            <person name="Xia J."/>
            <person name="Ren D."/>
        </authorList>
    </citation>
    <scope>FUNCTION</scope>
</reference>
<reference key="8">
    <citation type="journal article" date="2013" name="J. Med. Genet.">
        <title>Recessive truncating NALCN mutation in infantile neuroaxonal dystrophy with facial dysmorphism.</title>
        <authorList>
            <person name="Koeroglu C."/>
            <person name="Seven M."/>
            <person name="Tolun A."/>
        </authorList>
    </citation>
    <scope>INVOLVEMENT IN IHPRF1</scope>
</reference>
<reference key="9">
    <citation type="journal article" date="2015" name="Am. J. Hum. Genet.">
        <title>De novo mutations in NALCN cause a syndrome characterized by congenital contractures of the limbs and face, hypotonia, and developmental delay.</title>
        <authorList>
            <consortium name="University of Washington Center for Mendelian Genomics"/>
            <person name="Chong J.X."/>
            <person name="McMillin M.J."/>
            <person name="Shively K.M."/>
            <person name="Beck A.E."/>
            <person name="Marvin C.T."/>
            <person name="Armenteros J.R."/>
            <person name="Buckingham K.J."/>
            <person name="Nkinsi N.T."/>
            <person name="Boyle E.A."/>
            <person name="Berry M.N."/>
            <person name="Bocian M."/>
            <person name="Foulds N."/>
            <person name="Uzielli M.L."/>
            <person name="Haldeman-Englert C."/>
            <person name="Hennekam R.C."/>
            <person name="Kaplan P."/>
            <person name="Kline A.D."/>
            <person name="Mercer C.L."/>
            <person name="Nowaczyk M.J."/>
            <person name="Klein Wassink-Ruiter J.S."/>
            <person name="McPherson E.W."/>
            <person name="Moreno R.A."/>
            <person name="Scheuerle A.E."/>
            <person name="Shashi V."/>
            <person name="Stevens C.A."/>
            <person name="Carey J.C."/>
            <person name="Monteil A."/>
            <person name="Lory P."/>
            <person name="Tabor H.K."/>
            <person name="Smith J.D."/>
            <person name="Shendure J."/>
            <person name="Nickerson D.A."/>
            <person name="Bamshad M.J."/>
        </authorList>
    </citation>
    <scope>INVOLVEMENT IN CLIFAHDD</scope>
    <scope>VARIANTS CLIFAHDD PRO-177; ILE-312; GLY-313; SER-509; SER-578; PHE-590; PRO-1165 AND MET-1446</scope>
    <scope>CHARACTERIZATION OF VARIANTS CLIFAHDD SER-509 AND SER-578</scope>
</reference>
<reference key="10">
    <citation type="journal article" date="2019" name="Sci. Rep.">
        <title>Functional expression of CLIFAHDD and IHPRF pathogenic variants of the NALCN channel in neuronal cells reveals both gain- and loss-of-function properties.</title>
        <authorList>
            <person name="Bouasse M."/>
            <person name="Impheng H."/>
            <person name="Servant Z."/>
            <person name="Lory P."/>
            <person name="Monteil A."/>
        </authorList>
    </citation>
    <scope>CHARACTERIZATION OF VARIANTS CLIFAHDD SER-509 AND SER-578</scope>
    <scope>CHARACTERIZATION OF VARIANT IHPRF1 LEU-1287</scope>
    <scope>SUBCELLULAR LOCATION</scope>
    <scope>FUNCTION</scope>
</reference>
<reference key="11">
    <citation type="journal article" date="2020" name="Sci. Adv.">
        <title>The NALCN channel complex is voltage sensitive and directly modulated by extracellular calcium.</title>
        <authorList>
            <person name="Chua H.C."/>
            <person name="Wulf M."/>
            <person name="Weidling C."/>
            <person name="Rasmussen L.P."/>
            <person name="Pless S.A."/>
        </authorList>
    </citation>
    <scope>FUNCTION</scope>
    <scope>SUBUNIT</scope>
    <scope>SUBCELLULAR LOCATION</scope>
    <scope>ACTIVITY REGULATION</scope>
    <scope>MUTAGENESIS OF ARG-146; ARG-152; ARG-155; GLU-280; ARG-481; ARG-484; LYS-487; GLU-554; ASP-558; ASP-561; ARG-989; ARG-992; ARG-995; LYS-1115; GLU-1119; ARG-1310; GLU-1389 AND ASP-1390</scope>
</reference>
<reference evidence="19" key="12">
    <citation type="journal article" date="2020" name="Nature">
        <title>Structure of the human sodium leak channel NALCN.</title>
        <authorList>
            <person name="Kschonsak M."/>
            <person name="Chua H.C."/>
            <person name="Noland C.L."/>
            <person name="Weidling C."/>
            <person name="Clairfeuille T."/>
            <person name="Bahlke O.O."/>
            <person name="Ameen A.O."/>
            <person name="Li Z.R."/>
            <person name="Arthur C.P."/>
            <person name="Ciferri C."/>
            <person name="Pless S.A."/>
            <person name="Payandeh J."/>
        </authorList>
    </citation>
    <scope>STRUCTURE BY ELECTRON MICROSCOPY (2.80 ANGSTROMS) IN COMPLEX WITH NALF1</scope>
    <scope>FUNCTION</scope>
    <scope>CHARACTERIZATION OF VARIANTS CLIFAHDD PHE-590; GLN-1181 AND MET-1446</scope>
    <scope>CHARACTERIZATION OF VARIANT IHPRF1 LEU-1287</scope>
    <scope>DISULFIDE BOND</scope>
    <scope>GLYCOSYLATION AT ASN-1064</scope>
    <scope>SUBCELLULAR LOCATION</scope>
    <scope>TOPOLOGY</scope>
</reference>
<reference evidence="20" key="13">
    <citation type="journal article" date="2020" name="Nat. Commun.">
        <title>Structure of the human sodium leak channel NALCN in complex with FAM155A.</title>
        <authorList>
            <person name="Xie J."/>
            <person name="Ke M."/>
            <person name="Xu L."/>
            <person name="Lin S."/>
            <person name="Huang J."/>
            <person name="Zhang J."/>
            <person name="Yang F."/>
            <person name="Wu J."/>
            <person name="Yan Z."/>
        </authorList>
    </citation>
    <scope>STRUCTURE BY ELECTRON MICROSCOPY (3.10 ANGSTROMS) IN COMPLEX WITH NALF1</scope>
    <scope>DISULFIDE BONDS</scope>
    <scope>GLYCOSYLATION AT ASN-210; ASN-216 AND ASN-1064</scope>
    <scope>FUNCTION</scope>
    <scope>MUTAGENESIS OF PHE-325; ILE-328; PHE-332; LYS-504 AND LYS-505</scope>
    <scope>ACTIVITY REGULATION</scope>
    <scope>TRANSPORTER ACTIVITY</scope>
</reference>
<reference key="14">
    <citation type="journal article" date="2013" name="Am. J. Hum. Genet.">
        <title>Mutations in NALCN cause an autosomal-recessive syndrome with severe hypotonia, speech impairment, and cognitive delay.</title>
        <authorList>
            <person name="Al-Sayed M.D."/>
            <person name="Al-Zaidan H."/>
            <person name="Albakheet A."/>
            <person name="Hakami H."/>
            <person name="Kenana R."/>
            <person name="Al-Yafee Y."/>
            <person name="Al-Dosary M."/>
            <person name="Qari A."/>
            <person name="Al-Sheddi T."/>
            <person name="Al-Muheiza M."/>
            <person name="Al-Qubbaj W."/>
            <person name="Lakmache Y."/>
            <person name="Al-Hindi H."/>
            <person name="Ghaziuddin M."/>
            <person name="Colak D."/>
            <person name="Kaya N."/>
        </authorList>
    </citation>
    <scope>VARIANT IHPRF1 LEU-1287</scope>
</reference>
<reference key="15">
    <citation type="journal article" date="2015" name="Hum. Mutat.">
        <title>A gain-of-function mutation in NALCN in a child with intellectual disability, ataxia, and arthrogryposis.</title>
        <authorList>
            <person name="Aoyagi K."/>
            <person name="Rossignol E."/>
            <person name="Hamdan F.F."/>
            <person name="Mulcahy B."/>
            <person name="Xie L."/>
            <person name="Nagamatsu S."/>
            <person name="Rouleau G.A."/>
            <person name="Zhen M."/>
            <person name="Michaud J.L."/>
        </authorList>
    </citation>
    <scope>VARIANT CLIFAHDD GLN-1181</scope>
</reference>
<reference key="16">
    <citation type="journal article" date="2016" name="J. Hum. Genet.">
        <title>De novo missense mutations in NALCN cause developmental and intellectual impairment with hypotonia.</title>
        <authorList>
            <person name="Fukai R."/>
            <person name="Saitsu H."/>
            <person name="Okamoto N."/>
            <person name="Sakai Y."/>
            <person name="Fattal-Valevski A."/>
            <person name="Masaaki S."/>
            <person name="Kitai Y."/>
            <person name="Torio M."/>
            <person name="Kojima-Ishii K."/>
            <person name="Ihara K."/>
            <person name="Chernuha V."/>
            <person name="Nakashima M."/>
            <person name="Miyatake S."/>
            <person name="Tanaka F."/>
            <person name="Miyake N."/>
            <person name="Matsumoto N."/>
        </authorList>
    </citation>
    <scope>VARIANTS VAL-312; PHE-1020 AND GLN-1181</scope>
</reference>
<reference key="17">
    <citation type="journal article" date="2016" name="Neuropediatrics">
        <title>Novel mutations in the nonselective sodium leak channel (NALCN) lead to distal arthrogryposis with increased muscle tone.</title>
        <authorList>
            <person name="Karakaya M."/>
            <person name="Heller R."/>
            <person name="Kunde V."/>
            <person name="Zimmer K.P."/>
            <person name="Chao C.M."/>
            <person name="Nuernberg P."/>
            <person name="Cirak S."/>
        </authorList>
    </citation>
    <scope>VARIANTS CYS-317 AND PHE-595</scope>
</reference>
<evidence type="ECO:0000250" key="1">
    <source>
        <dbReference type="UniProtKB" id="Q8BXR5"/>
    </source>
</evidence>
<evidence type="ECO:0000255" key="2"/>
<evidence type="ECO:0000256" key="3">
    <source>
        <dbReference type="SAM" id="MobiDB-lite"/>
    </source>
</evidence>
<evidence type="ECO:0000269" key="4">
    <source>
    </source>
</evidence>
<evidence type="ECO:0000269" key="5">
    <source>
    </source>
</evidence>
<evidence type="ECO:0000269" key="6">
    <source>
    </source>
</evidence>
<evidence type="ECO:0000269" key="7">
    <source>
    </source>
</evidence>
<evidence type="ECO:0000269" key="8">
    <source>
    </source>
</evidence>
<evidence type="ECO:0000269" key="9">
    <source>
    </source>
</evidence>
<evidence type="ECO:0000269" key="10">
    <source>
    </source>
</evidence>
<evidence type="ECO:0000269" key="11">
    <source>
    </source>
</evidence>
<evidence type="ECO:0000269" key="12">
    <source>
    </source>
</evidence>
<evidence type="ECO:0000269" key="13">
    <source>
    </source>
</evidence>
<evidence type="ECO:0000269" key="14">
    <source>
    </source>
</evidence>
<evidence type="ECO:0000303" key="15">
    <source>
    </source>
</evidence>
<evidence type="ECO:0000303" key="16">
    <source ref="1"/>
</evidence>
<evidence type="ECO:0000305" key="17"/>
<evidence type="ECO:0000312" key="18">
    <source>
        <dbReference type="HGNC" id="HGNC:19082"/>
    </source>
</evidence>
<evidence type="ECO:0007744" key="19">
    <source>
        <dbReference type="PDB" id="6XIW"/>
    </source>
</evidence>
<evidence type="ECO:0007744" key="20">
    <source>
        <dbReference type="PDB" id="7CM3"/>
    </source>
</evidence>
<evidence type="ECO:0007829" key="21">
    <source>
        <dbReference type="PDB" id="6XIW"/>
    </source>
</evidence>
<evidence type="ECO:0007829" key="22">
    <source>
        <dbReference type="PDB" id="7CM3"/>
    </source>
</evidence>
<evidence type="ECO:0007829" key="23">
    <source>
        <dbReference type="PDB" id="7SX3"/>
    </source>
</evidence>
<evidence type="ECO:0007829" key="24">
    <source>
        <dbReference type="PDB" id="7SX4"/>
    </source>
</evidence>
<feature type="chain" id="PRO_0000314010" description="Sodium leak channel NALCN">
    <location>
        <begin position="1"/>
        <end position="1738"/>
    </location>
</feature>
<feature type="topological domain" description="Cytoplasmic" evidence="13 19">
    <location>
        <begin position="1"/>
        <end position="36"/>
    </location>
</feature>
<feature type="transmembrane region" description="Helical; Name=S1 of repeat I" evidence="13 19">
    <location>
        <begin position="37"/>
        <end position="57"/>
    </location>
</feature>
<feature type="topological domain" description="Extracellular" evidence="13 19">
    <location>
        <begin position="58"/>
        <end position="65"/>
    </location>
</feature>
<feature type="transmembrane region" description="Helical; Name=S2 of repeat I" evidence="13 19">
    <location>
        <begin position="66"/>
        <end position="90"/>
    </location>
</feature>
<feature type="topological domain" description="Cytoplasmic" evidence="13 19">
    <location>
        <begin position="91"/>
        <end position="106"/>
    </location>
</feature>
<feature type="transmembrane region" description="Helical; Name=S3 of repeat I" evidence="13 19">
    <location>
        <begin position="107"/>
        <end position="129"/>
    </location>
</feature>
<feature type="topological domain" description="Extracellular" evidence="13 19">
    <location>
        <begin position="130"/>
        <end position="137"/>
    </location>
</feature>
<feature type="transmembrane region" description="Helical; Voltage-sensor; Name=S4 of repeat I" evidence="13 19">
    <location>
        <begin position="138"/>
        <end position="158"/>
    </location>
</feature>
<feature type="topological domain" description="Cytoplasmic" evidence="13 19">
    <location>
        <begin position="159"/>
        <end position="173"/>
    </location>
</feature>
<feature type="transmembrane region" description="Helical; Name=S5 of repeat I" evidence="13 19">
    <location>
        <begin position="174"/>
        <end position="199"/>
    </location>
</feature>
<feature type="topological domain" description="Extracellular" evidence="13 19">
    <location>
        <begin position="200"/>
        <end position="269"/>
    </location>
</feature>
<feature type="intramembrane region" description="Pore-forming" evidence="13 19">
    <location>
        <begin position="270"/>
        <end position="289"/>
    </location>
</feature>
<feature type="topological domain" description="Extracellular" evidence="13 19">
    <location>
        <begin position="290"/>
        <end position="294"/>
    </location>
</feature>
<feature type="transmembrane region" description="Helical; Name=S6 of repeat I" evidence="13 19">
    <location>
        <begin position="295"/>
        <end position="322"/>
    </location>
</feature>
<feature type="topological domain" description="Cytoplasmic" evidence="13 19">
    <location>
        <begin position="323"/>
        <end position="382"/>
    </location>
</feature>
<feature type="transmembrane region" description="Helical; Name=S1 of repeat II" evidence="13 19">
    <location>
        <begin position="383"/>
        <end position="403"/>
    </location>
</feature>
<feature type="topological domain" description="Extracellular" evidence="13 19">
    <location>
        <begin position="404"/>
        <end position="416"/>
    </location>
</feature>
<feature type="transmembrane region" description="Helical; Name=S2 of repeat II" evidence="13 19">
    <location>
        <begin position="417"/>
        <end position="439"/>
    </location>
</feature>
<feature type="topological domain" description="Cytoplasmic" evidence="13 19">
    <location>
        <begin position="440"/>
        <end position="447"/>
    </location>
</feature>
<feature type="transmembrane region" description="Helical; Name=S3 of repeat II" evidence="13 19">
    <location>
        <begin position="448"/>
        <end position="468"/>
    </location>
</feature>
<feature type="topological domain" description="Extracellular" evidence="13 19">
    <location>
        <begin position="469"/>
        <end position="472"/>
    </location>
</feature>
<feature type="transmembrane region" description="Helical; Voltage-sensor; Name=S4 of repeat II" evidence="13 19">
    <location>
        <begin position="473"/>
        <end position="492"/>
    </location>
</feature>
<feature type="topological domain" description="Cytoplasmic" evidence="13 19">
    <location>
        <begin position="493"/>
        <end position="502"/>
    </location>
</feature>
<feature type="transmembrane region" description="Helical; Name=S5 of repeat II" evidence="13 19">
    <location>
        <begin position="503"/>
        <end position="530"/>
    </location>
</feature>
<feature type="topological domain" description="Extracellular" evidence="13 19">
    <location>
        <begin position="531"/>
        <end position="543"/>
    </location>
</feature>
<feature type="intramembrane region" description="Pore-forming" evidence="13 19">
    <location>
        <begin position="544"/>
        <end position="563"/>
    </location>
</feature>
<feature type="topological domain" description="Extracellular" evidence="13 19">
    <location>
        <begin position="564"/>
        <end position="569"/>
    </location>
</feature>
<feature type="transmembrane region" description="Helical; Name=S6 of repeat II" evidence="13 19">
    <location>
        <begin position="570"/>
        <end position="599"/>
    </location>
</feature>
<feature type="topological domain" description="Cytoplasmic" evidence="13 19">
    <location>
        <begin position="600"/>
        <end position="886"/>
    </location>
</feature>
<feature type="transmembrane region" description="Helical; Name=S1 of repeat III" evidence="13 19">
    <location>
        <begin position="887"/>
        <end position="906"/>
    </location>
</feature>
<feature type="topological domain" description="Extracellular" evidence="13 19">
    <location>
        <begin position="907"/>
        <end position="915"/>
    </location>
</feature>
<feature type="transmembrane region" description="Helical; Name=S2 of repeat III" evidence="13 19">
    <location>
        <begin position="916"/>
        <end position="939"/>
    </location>
</feature>
<feature type="topological domain" description="Cytoplasmic" evidence="13 19">
    <location>
        <begin position="940"/>
        <end position="947"/>
    </location>
</feature>
<feature type="transmembrane region" description="Helical; Name=S3 of repeat III" evidence="13 19">
    <location>
        <begin position="948"/>
        <end position="972"/>
    </location>
</feature>
<feature type="topological domain" description="Extracellular" evidence="13 19">
    <location>
        <begin position="973"/>
        <end position="980"/>
    </location>
</feature>
<feature type="transmembrane region" description="Helical; Voltage-sensor; Name=S4 of repeat III" evidence="13 19">
    <location>
        <begin position="981"/>
        <end position="1003"/>
    </location>
</feature>
<feature type="topological domain" description="Cytoplasmic" evidence="13 19">
    <location>
        <begin position="1004"/>
        <end position="1015"/>
    </location>
</feature>
<feature type="transmembrane region" description="Helical; Name=S5 of repeat III" evidence="13 19">
    <location>
        <begin position="1016"/>
        <end position="1039"/>
    </location>
</feature>
<feature type="topological domain" description="Extracellular" evidence="13 19">
    <location>
        <begin position="1040"/>
        <end position="1104"/>
    </location>
</feature>
<feature type="intramembrane region" description="Pore-forming" evidence="13 19">
    <location>
        <begin position="1105"/>
        <end position="1124"/>
    </location>
</feature>
<feature type="topological domain" description="Extracellular" evidence="13 19">
    <location>
        <begin position="1125"/>
        <end position="1129"/>
    </location>
</feature>
<feature type="transmembrane region" description="Helical; Name=S6 of repeat III" evidence="13 19">
    <location>
        <begin position="1130"/>
        <end position="1159"/>
    </location>
</feature>
<feature type="topological domain" description="Cytoplasmic" evidence="13 19">
    <location>
        <begin position="1160"/>
        <end position="1210"/>
    </location>
</feature>
<feature type="transmembrane region" description="Helical; Name=S1 of repeat IV" evidence="13 19">
    <location>
        <begin position="1211"/>
        <end position="1227"/>
    </location>
</feature>
<feature type="topological domain" description="Extracellular" evidence="13 19">
    <location>
        <begin position="1228"/>
        <end position="1236"/>
    </location>
</feature>
<feature type="transmembrane region" description="Helical; Name=S2 of repeat IV" evidence="13 19">
    <location>
        <begin position="1237"/>
        <end position="1260"/>
    </location>
</feature>
<feature type="topological domain" description="Cytoplasmic" evidence="13 19">
    <location>
        <begin position="1261"/>
        <end position="1271"/>
    </location>
</feature>
<feature type="transmembrane region" description="Helical; Name=S3 of repeat IV" evidence="13 19">
    <location>
        <begin position="1272"/>
        <end position="1293"/>
    </location>
</feature>
<feature type="topological domain" description="Extracellular" evidence="13 19">
    <location>
        <begin position="1294"/>
        <end position="1296"/>
    </location>
</feature>
<feature type="transmembrane region" description="Helical; Voltage-sensor; Name=S4 of repeat IV" evidence="13 19">
    <location>
        <begin position="1297"/>
        <end position="1318"/>
    </location>
</feature>
<feature type="topological domain" description="Cytoplasmic" evidence="13 19">
    <location>
        <begin position="1319"/>
        <end position="1331"/>
    </location>
</feature>
<feature type="transmembrane region" description="Helical; Name=S5 of repeat IV" evidence="13 19">
    <location>
        <begin position="1332"/>
        <end position="1357"/>
    </location>
</feature>
<feature type="topological domain" description="Extracellular" evidence="13 19">
    <location>
        <begin position="1358"/>
        <end position="1378"/>
    </location>
</feature>
<feature type="intramembrane region" description="Pore-forming" evidence="13 19">
    <location>
        <begin position="1379"/>
        <end position="1398"/>
    </location>
</feature>
<feature type="topological domain" description="Extracellular" evidence="13 19">
    <location>
        <begin position="1399"/>
        <end position="1420"/>
    </location>
</feature>
<feature type="transmembrane region" description="Helical; Name=S6 of repeat IV" evidence="13 19">
    <location>
        <begin position="1421"/>
        <end position="1447"/>
    </location>
</feature>
<feature type="topological domain" description="Cytoplasmic" evidence="13 19">
    <location>
        <begin position="1448"/>
        <end position="1738"/>
    </location>
</feature>
<feature type="region of interest" description="Disordered" evidence="3">
    <location>
        <begin position="762"/>
        <end position="785"/>
    </location>
</feature>
<feature type="region of interest" description="Disordered" evidence="3">
    <location>
        <begin position="1611"/>
        <end position="1678"/>
    </location>
</feature>
<feature type="coiled-coil region" evidence="2">
    <location>
        <begin position="795"/>
        <end position="830"/>
    </location>
</feature>
<feature type="compositionally biased region" description="Polar residues" evidence="3">
    <location>
        <begin position="1613"/>
        <end position="1632"/>
    </location>
</feature>
<feature type="compositionally biased region" description="Low complexity" evidence="3">
    <location>
        <begin position="1633"/>
        <end position="1648"/>
    </location>
</feature>
<feature type="glycosylation site" description="N-linked (GlcNAc...) asparagine" evidence="14 20">
    <location>
        <position position="210"/>
    </location>
</feature>
<feature type="glycosylation site" description="N-linked (GlcNAc...) asparagine" evidence="14 20">
    <location>
        <position position="216"/>
    </location>
</feature>
<feature type="glycosylation site" description="N-linked (GlcNAc...) asparagine" evidence="13 14 19 20">
    <location>
        <position position="1064"/>
    </location>
</feature>
<feature type="disulfide bond" evidence="13 14 19 20">
    <location>
        <begin position="207"/>
        <end position="239"/>
    </location>
</feature>
<feature type="disulfide bond" evidence="13 14 19 20">
    <location>
        <begin position="229"/>
        <end position="245"/>
    </location>
</feature>
<feature type="disulfide bond" evidence="13 14 19 20">
    <location>
        <begin position="1046"/>
        <end position="1057"/>
    </location>
</feature>
<feature type="disulfide bond" evidence="13 14 19 20">
    <location>
        <begin position="1405"/>
        <end position="1417"/>
    </location>
</feature>
<feature type="splice variant" id="VSP_030188" description="In isoform 3." evidence="15">
    <original>NVT</original>
    <variation>LSL</variation>
    <location>
        <begin position="216"/>
        <end position="218"/>
    </location>
</feature>
<feature type="splice variant" id="VSP_030189" description="In isoform 3." evidence="15">
    <location>
        <begin position="219"/>
        <end position="1738"/>
    </location>
</feature>
<feature type="splice variant" id="VSP_030190" description="In isoform 2." evidence="15">
    <original>ILLSLFVAVILDNLELDEDLKKLKQLKQSEANADTKEKLPLRLRIFEKFPNRPQMVKISKLPSDFTVPKIRESFMKQFID</original>
    <variation>PPSLIRDLCGTQDACPSCLPLQPPNHLPGSQTLARLTHQALTTPPGMRSSQLFSKISLLLGICVAWESILGSLSLSHNLQ</variation>
    <location>
        <begin position="589"/>
        <end position="668"/>
    </location>
</feature>
<feature type="splice variant" id="VSP_030191" description="In isoform 2." evidence="15">
    <location>
        <begin position="669"/>
        <end position="1738"/>
    </location>
</feature>
<feature type="sequence variant" id="VAR_073361" description="In CLIFAHDD; dbSNP:rs786203984." evidence="7">
    <original>Q</original>
    <variation>P</variation>
    <location>
        <position position="177"/>
    </location>
</feature>
<feature type="sequence variant" id="VAR_073362" description="In CLIFAHDD; dbSNP:rs878853134." evidence="7">
    <original>L</original>
    <variation>I</variation>
    <location>
        <position position="312"/>
    </location>
</feature>
<feature type="sequence variant" id="VAR_076674" description="Found in patients with neurodevelopmental disease and hypotonia; uncertain significance." evidence="9">
    <original>L</original>
    <variation>V</variation>
    <location>
        <position position="312"/>
    </location>
</feature>
<feature type="sequence variant" id="VAR_073363" description="In CLIFAHDD; dbSNP:rs786203985." evidence="7">
    <original>V</original>
    <variation>G</variation>
    <location>
        <position position="313"/>
    </location>
</feature>
<feature type="sequence variant" id="VAR_076675" description="Found in patients with distal arthrogryposis and central hypertonia; uncertain significance; dbSNP:rs1594616249." evidence="10">
    <original>F</original>
    <variation>C</variation>
    <location>
        <position position="317"/>
    </location>
</feature>
<feature type="sequence variant" id="VAR_073364" description="In CLIFAHDD and IHPRF1; nearly eliminates wild-type protein expression; dominant-negative mutation; decreases membrane expression; induces higher current density and slower inactivation; dbSNP:rs786203987." evidence="7 11">
    <original>L</original>
    <variation>S</variation>
    <location>
        <position position="509"/>
    </location>
</feature>
<feature type="sequence variant" id="VAR_073365" description="In CLIFAHDD and IHPRF1; nearly eliminates wild-type protein expression; dominant-negative mutation; decreases membrane expression; induces higher current density and slower inactivation; dbSNP:rs786203988." evidence="7 11">
    <original>Y</original>
    <variation>S</variation>
    <location>
        <position position="578"/>
    </location>
</feature>
<feature type="sequence variant" id="VAR_073366" description="In CLIFAHDD; dbSNP:rs786203986." evidence="7 13">
    <original>L</original>
    <variation>F</variation>
    <location>
        <position position="590"/>
    </location>
</feature>
<feature type="sequence variant" id="VAR_076676" description="Found in patients with distal arthrogryposis and central hypertonia; uncertain significance; dbSNP:rs1594368753." evidence="10">
    <original>V</original>
    <variation>F</variation>
    <location>
        <position position="595"/>
    </location>
</feature>
<feature type="sequence variant" id="VAR_076677" description="Found in patients with neurodevelopmental disease and hypotonia; uncertain significance." evidence="9">
    <original>V</original>
    <variation>F</variation>
    <location>
        <position position="1020"/>
    </location>
</feature>
<feature type="sequence variant" id="VAR_073367" description="In CLIFAHDD; dbSNP:rs878853128." evidence="7">
    <original>T</original>
    <variation>P</variation>
    <location>
        <position position="1165"/>
    </location>
</feature>
<feature type="sequence variant" id="VAR_076678" description="In CLIFAHDD; uncertain significance; also found in patients with neurodevelopmental disease and hypotonia; uncertain significance; dbSNP:rs786201003." evidence="8 9 13">
    <original>R</original>
    <variation>Q</variation>
    <location>
        <position position="1181"/>
    </location>
</feature>
<feature type="sequence variant" id="VAR_070599" description="In IHPRF1; loss of function; dbSNP:rs587777068." evidence="6 11 13">
    <original>W</original>
    <variation>L</variation>
    <location>
        <position position="1287"/>
    </location>
</feature>
<feature type="sequence variant" id="VAR_073368" description="In CLIFAHDD; dbSNP:rs878853127." evidence="7 13">
    <original>I</original>
    <variation>M</variation>
    <location>
        <position position="1446"/>
    </location>
</feature>
<feature type="mutagenesis site" description="Affects voltage sensitivity." evidence="12">
    <original>R</original>
    <variation>Q</variation>
    <location>
        <position position="146"/>
    </location>
</feature>
<feature type="mutagenesis site" description="Affects voltage sensitivity." evidence="12">
    <original>R</original>
    <variation>Q</variation>
    <location>
        <position position="152"/>
    </location>
</feature>
<feature type="mutagenesis site" description="Affects voltage sensitivity." evidence="12">
    <original>R</original>
    <variation>Q</variation>
    <location>
        <position position="155"/>
    </location>
</feature>
<feature type="mutagenesis site" description="Drastically more sensitive to Ca(2+) block." evidence="12">
    <original>E</original>
    <variation>A</variation>
    <location>
        <position position="280"/>
    </location>
</feature>
<feature type="mutagenesis site" description="Increases channel activity." evidence="14">
    <original>F</original>
    <variation>A</variation>
    <location>
        <position position="325"/>
    </location>
</feature>
<feature type="mutagenesis site" description="Increases channel activity." evidence="14">
    <original>I</original>
    <variation>W</variation>
    <location>
        <position position="328"/>
    </location>
</feature>
<feature type="mutagenesis site" description="No effect on the channel activity." evidence="14">
    <original>F</original>
    <variation>A</variation>
    <location>
        <position position="332"/>
    </location>
</feature>
<feature type="mutagenesis site" description="Exhibits altered current kinetics." evidence="12">
    <original>R</original>
    <variation>Q</variation>
    <location>
        <position position="481"/>
    </location>
</feature>
<feature type="mutagenesis site" description="Does not exhibited altered current kinetics." evidence="12">
    <original>R</original>
    <variation>Q</variation>
    <location>
        <position position="484"/>
    </location>
</feature>
<feature type="mutagenesis site" description="Does not exhibited altered current kinetics." evidence="12">
    <original>K</original>
    <variation>Q</variation>
    <location>
        <position position="487"/>
    </location>
</feature>
<feature type="mutagenesis site" description="Decreases channel activity." evidence="14">
    <original>K</original>
    <variation>D</variation>
    <variation>A</variation>
    <location>
        <position position="504"/>
    </location>
</feature>
<feature type="mutagenesis site" description="Decreases channel activity." evidence="14">
    <original>K</original>
    <variation>A</variation>
    <location>
        <position position="505"/>
    </location>
</feature>
<feature type="mutagenesis site" description="Drastically more sensitive to Ca(2+) block." evidence="12">
    <original>E</original>
    <variation>A</variation>
    <location>
        <position position="554"/>
    </location>
</feature>
<feature type="mutagenesis site" description="Moderately more sensitive to Ca(2+) block." evidence="12">
    <original>D</original>
    <variation>A</variation>
    <location>
        <position position="558"/>
    </location>
</feature>
<feature type="mutagenesis site" description="No effect on the blockage of NALCN pore by Ca(2+)." evidence="12">
    <original>D</original>
    <variation>A</variation>
    <location>
        <position position="561"/>
    </location>
</feature>
<feature type="mutagenesis site" description="Does not affect the voltage sensitivity." evidence="12">
    <original>R</original>
    <variation>Q</variation>
    <location>
        <position position="989"/>
    </location>
</feature>
<feature type="mutagenesis site" description="Does not affect the voltage sensitivity." evidence="12">
    <original>R</original>
    <variation>Q</variation>
    <location>
        <position position="992"/>
    </location>
</feature>
<feature type="mutagenesis site" description="Does not affect the voltage sensitivity." evidence="12">
    <original>R</original>
    <variation>Q</variation>
    <location>
        <position position="995"/>
    </location>
</feature>
<feature type="mutagenesis site" description="No effect on the blockage of NALCN pore by Ca(2+)." evidence="12">
    <original>K</original>
    <variation>A</variation>
    <location>
        <position position="1115"/>
    </location>
</feature>
<feature type="mutagenesis site" description="Moderately more sensitive to Ca(2+) block." evidence="12">
    <original>E</original>
    <variation>A</variation>
    <location>
        <position position="1119"/>
    </location>
</feature>
<feature type="mutagenesis site" description="Does not affect the voltage sensitivity." evidence="12">
    <original>R</original>
    <variation>Q</variation>
    <location>
        <position position="1310"/>
    </location>
</feature>
<feature type="mutagenesis site" description="Moderately more sensitive to Ca(2+) block." evidence="12">
    <original>E</original>
    <variation>A</variation>
    <location>
        <position position="1389"/>
    </location>
</feature>
<feature type="mutagenesis site" description="Drastically more sensitive to Ca(2+) block." evidence="12">
    <original>D</original>
    <variation>A</variation>
    <location>
        <position position="1390"/>
    </location>
</feature>
<feature type="turn" evidence="22">
    <location>
        <begin position="32"/>
        <end position="34"/>
    </location>
</feature>
<feature type="helix" evidence="21">
    <location>
        <begin position="37"/>
        <end position="55"/>
    </location>
</feature>
<feature type="helix" evidence="21">
    <location>
        <begin position="58"/>
        <end position="63"/>
    </location>
</feature>
<feature type="helix" evidence="21">
    <location>
        <begin position="67"/>
        <end position="90"/>
    </location>
</feature>
<feature type="helix" evidence="21">
    <location>
        <begin position="108"/>
        <end position="129"/>
    </location>
</feature>
<feature type="strand" evidence="22">
    <location>
        <begin position="130"/>
        <end position="133"/>
    </location>
</feature>
<feature type="helix" evidence="21">
    <location>
        <begin position="138"/>
        <end position="143"/>
    </location>
</feature>
<feature type="helix" evidence="21">
    <location>
        <begin position="146"/>
        <end position="149"/>
    </location>
</feature>
<feature type="helix" evidence="21">
    <location>
        <begin position="150"/>
        <end position="153"/>
    </location>
</feature>
<feature type="helix" evidence="21">
    <location>
        <begin position="156"/>
        <end position="158"/>
    </location>
</feature>
<feature type="strand" evidence="22">
    <location>
        <begin position="160"/>
        <end position="162"/>
    </location>
</feature>
<feature type="helix" evidence="21">
    <location>
        <begin position="164"/>
        <end position="199"/>
    </location>
</feature>
<feature type="strand" evidence="21">
    <location>
        <begin position="205"/>
        <end position="211"/>
    </location>
</feature>
<feature type="helix" evidence="21">
    <location>
        <begin position="219"/>
        <end position="221"/>
    </location>
</feature>
<feature type="strand" evidence="21">
    <location>
        <begin position="231"/>
        <end position="236"/>
    </location>
</feature>
<feature type="strand" evidence="21">
    <location>
        <begin position="243"/>
        <end position="247"/>
    </location>
</feature>
<feature type="helix" evidence="21">
    <location>
        <begin position="248"/>
        <end position="251"/>
    </location>
</feature>
<feature type="helix" evidence="21">
    <location>
        <begin position="255"/>
        <end position="258"/>
    </location>
</feature>
<feature type="strand" evidence="21">
    <location>
        <begin position="262"/>
        <end position="265"/>
    </location>
</feature>
<feature type="helix" evidence="21">
    <location>
        <begin position="266"/>
        <end position="277"/>
    </location>
</feature>
<feature type="helix" evidence="21">
    <location>
        <begin position="282"/>
        <end position="292"/>
    </location>
</feature>
<feature type="helix" evidence="21">
    <location>
        <begin position="295"/>
        <end position="308"/>
    </location>
</feature>
<feature type="turn" evidence="21">
    <location>
        <begin position="309"/>
        <end position="311"/>
    </location>
</feature>
<feature type="helix" evidence="21">
    <location>
        <begin position="312"/>
        <end position="333"/>
    </location>
</feature>
<feature type="strand" evidence="23">
    <location>
        <begin position="355"/>
        <end position="357"/>
    </location>
</feature>
<feature type="helix" evidence="22">
    <location>
        <begin position="374"/>
        <end position="376"/>
    </location>
</feature>
<feature type="helix" evidence="21">
    <location>
        <begin position="378"/>
        <end position="381"/>
    </location>
</feature>
<feature type="helix" evidence="21">
    <location>
        <begin position="384"/>
        <end position="402"/>
    </location>
</feature>
<feature type="strand" evidence="23">
    <location>
        <begin position="409"/>
        <end position="411"/>
    </location>
</feature>
<feature type="helix" evidence="21">
    <location>
        <begin position="417"/>
        <end position="446"/>
    </location>
</feature>
<feature type="helix" evidence="21">
    <location>
        <begin position="449"/>
        <end position="464"/>
    </location>
</feature>
<feature type="turn" evidence="21">
    <location>
        <begin position="467"/>
        <end position="471"/>
    </location>
</feature>
<feature type="helix" evidence="21">
    <location>
        <begin position="475"/>
        <end position="480"/>
    </location>
</feature>
<feature type="helix" evidence="21">
    <location>
        <begin position="481"/>
        <end position="488"/>
    </location>
</feature>
<feature type="helix" evidence="21">
    <location>
        <begin position="490"/>
        <end position="499"/>
    </location>
</feature>
<feature type="helix" evidence="21">
    <location>
        <begin position="503"/>
        <end position="528"/>
    </location>
</feature>
<feature type="strand" evidence="21">
    <location>
        <begin position="537"/>
        <end position="539"/>
    </location>
</feature>
<feature type="helix" evidence="21">
    <location>
        <begin position="540"/>
        <end position="552"/>
    </location>
</feature>
<feature type="turn" evidence="24">
    <location>
        <begin position="553"/>
        <end position="555"/>
    </location>
</feature>
<feature type="helix" evidence="21">
    <location>
        <begin position="556"/>
        <end position="566"/>
    </location>
</feature>
<feature type="turn" evidence="21">
    <location>
        <begin position="569"/>
        <end position="571"/>
    </location>
</feature>
<feature type="helix" evidence="21">
    <location>
        <begin position="572"/>
        <end position="588"/>
    </location>
</feature>
<feature type="helix" evidence="21">
    <location>
        <begin position="590"/>
        <end position="602"/>
    </location>
</feature>
<feature type="helix" evidence="21">
    <location>
        <begin position="606"/>
        <end position="615"/>
    </location>
</feature>
<feature type="helix" evidence="23">
    <location>
        <begin position="630"/>
        <end position="632"/>
    </location>
</feature>
<feature type="helix" evidence="23">
    <location>
        <begin position="633"/>
        <end position="636"/>
    </location>
</feature>
<feature type="strand" evidence="23">
    <location>
        <begin position="647"/>
        <end position="649"/>
    </location>
</feature>
<feature type="helix" evidence="23">
    <location>
        <begin position="660"/>
        <end position="668"/>
    </location>
</feature>
<feature type="helix" evidence="23">
    <location>
        <begin position="714"/>
        <end position="717"/>
    </location>
</feature>
<feature type="helix" evidence="23">
    <location>
        <begin position="719"/>
        <end position="739"/>
    </location>
</feature>
<feature type="helix" evidence="23">
    <location>
        <begin position="818"/>
        <end position="829"/>
    </location>
</feature>
<feature type="strand" evidence="23">
    <location>
        <begin position="830"/>
        <end position="834"/>
    </location>
</feature>
<feature type="helix" evidence="23">
    <location>
        <begin position="836"/>
        <end position="838"/>
    </location>
</feature>
<feature type="helix" evidence="21">
    <location>
        <begin position="847"/>
        <end position="855"/>
    </location>
</feature>
<feature type="helix" evidence="21">
    <location>
        <begin position="878"/>
        <end position="882"/>
    </location>
</feature>
<feature type="helix" evidence="21">
    <location>
        <begin position="887"/>
        <end position="903"/>
    </location>
</feature>
<feature type="strand" evidence="21">
    <location>
        <begin position="908"/>
        <end position="910"/>
    </location>
</feature>
<feature type="turn" evidence="21">
    <location>
        <begin position="912"/>
        <end position="914"/>
    </location>
</feature>
<feature type="helix" evidence="21">
    <location>
        <begin position="916"/>
        <end position="940"/>
    </location>
</feature>
<feature type="strand" evidence="21">
    <location>
        <begin position="942"/>
        <end position="945"/>
    </location>
</feature>
<feature type="strand" evidence="21">
    <location>
        <begin position="949"/>
        <end position="952"/>
    </location>
</feature>
<feature type="helix" evidence="21">
    <location>
        <begin position="953"/>
        <end position="971"/>
    </location>
</feature>
<feature type="strand" evidence="23">
    <location>
        <begin position="978"/>
        <end position="980"/>
    </location>
</feature>
<feature type="helix" evidence="21">
    <location>
        <begin position="981"/>
        <end position="988"/>
    </location>
</feature>
<feature type="helix" evidence="21">
    <location>
        <begin position="989"/>
        <end position="994"/>
    </location>
</feature>
<feature type="helix" evidence="21">
    <location>
        <begin position="995"/>
        <end position="999"/>
    </location>
</feature>
<feature type="helix" evidence="21">
    <location>
        <begin position="1001"/>
        <end position="1011"/>
    </location>
</feature>
<feature type="helix" evidence="21">
    <location>
        <begin position="1014"/>
        <end position="1039"/>
    </location>
</feature>
<feature type="turn" evidence="23">
    <location>
        <begin position="1040"/>
        <end position="1042"/>
    </location>
</feature>
<feature type="strand" evidence="21">
    <location>
        <begin position="1045"/>
        <end position="1048"/>
    </location>
</feature>
<feature type="helix" evidence="21">
    <location>
        <begin position="1054"/>
        <end position="1056"/>
    </location>
</feature>
<feature type="strand" evidence="21">
    <location>
        <begin position="1059"/>
        <end position="1065"/>
    </location>
</feature>
<feature type="strand" evidence="22">
    <location>
        <begin position="1069"/>
        <end position="1071"/>
    </location>
</feature>
<feature type="strand" evidence="21">
    <location>
        <begin position="1082"/>
        <end position="1087"/>
    </location>
</feature>
<feature type="helix" evidence="21">
    <location>
        <begin position="1101"/>
        <end position="1112"/>
    </location>
</feature>
<feature type="helix" evidence="21">
    <location>
        <begin position="1117"/>
        <end position="1127"/>
    </location>
</feature>
<feature type="helix" evidence="23">
    <location>
        <begin position="1130"/>
        <end position="1132"/>
    </location>
</feature>
<feature type="helix" evidence="21">
    <location>
        <begin position="1133"/>
        <end position="1143"/>
    </location>
</feature>
<feature type="turn" evidence="21">
    <location>
        <begin position="1144"/>
        <end position="1146"/>
    </location>
</feature>
<feature type="helix" evidence="21">
    <location>
        <begin position="1147"/>
        <end position="1163"/>
    </location>
</feature>
<feature type="strand" evidence="21">
    <location>
        <begin position="1166"/>
        <end position="1168"/>
    </location>
</feature>
<feature type="helix" evidence="21">
    <location>
        <begin position="1170"/>
        <end position="1184"/>
    </location>
</feature>
<feature type="helix" evidence="21">
    <location>
        <begin position="1198"/>
        <end position="1207"/>
    </location>
</feature>
<feature type="helix" evidence="21">
    <location>
        <begin position="1210"/>
        <end position="1223"/>
    </location>
</feature>
<feature type="helix" evidence="21">
    <location>
        <begin position="1224"/>
        <end position="1228"/>
    </location>
</feature>
<feature type="strand" evidence="22">
    <location>
        <begin position="1233"/>
        <end position="1235"/>
    </location>
</feature>
<feature type="helix" evidence="21">
    <location>
        <begin position="1238"/>
        <end position="1262"/>
    </location>
</feature>
<feature type="helix" evidence="21">
    <location>
        <begin position="1264"/>
        <end position="1268"/>
    </location>
</feature>
<feature type="helix" evidence="21">
    <location>
        <begin position="1272"/>
        <end position="1291"/>
    </location>
</feature>
<feature type="turn" evidence="21">
    <location>
        <begin position="1292"/>
        <end position="1294"/>
    </location>
</feature>
<feature type="helix" evidence="21">
    <location>
        <begin position="1297"/>
        <end position="1312"/>
    </location>
</feature>
<feature type="helix" evidence="21">
    <location>
        <begin position="1313"/>
        <end position="1316"/>
    </location>
</feature>
<feature type="helix" evidence="21">
    <location>
        <begin position="1319"/>
        <end position="1334"/>
    </location>
</feature>
<feature type="helix" evidence="21">
    <location>
        <begin position="1336"/>
        <end position="1356"/>
    </location>
</feature>
<feature type="strand" evidence="21">
    <location>
        <begin position="1367"/>
        <end position="1370"/>
    </location>
</feature>
<feature type="helix" evidence="21">
    <location>
        <begin position="1375"/>
        <end position="1386"/>
    </location>
</feature>
<feature type="turn" evidence="21">
    <location>
        <begin position="1387"/>
        <end position="1390"/>
    </location>
</feature>
<feature type="helix" evidence="21">
    <location>
        <begin position="1391"/>
        <end position="1397"/>
    </location>
</feature>
<feature type="turn" evidence="22">
    <location>
        <begin position="1412"/>
        <end position="1414"/>
    </location>
</feature>
<feature type="helix" evidence="21">
    <location>
        <begin position="1420"/>
        <end position="1436"/>
    </location>
</feature>
<feature type="helix" evidence="21">
    <location>
        <begin position="1438"/>
        <end position="1453"/>
    </location>
</feature>
<feature type="strand" evidence="21">
    <location>
        <begin position="1459"/>
        <end position="1461"/>
    </location>
</feature>
<feature type="helix" evidence="21">
    <location>
        <begin position="1464"/>
        <end position="1477"/>
    </location>
</feature>
<feature type="strand" evidence="23">
    <location>
        <begin position="1479"/>
        <end position="1481"/>
    </location>
</feature>
<feature type="strand" evidence="21">
    <location>
        <begin position="1482"/>
        <end position="1485"/>
    </location>
</feature>
<feature type="helix" evidence="21">
    <location>
        <begin position="1489"/>
        <end position="1496"/>
    </location>
</feature>
<feature type="helix" evidence="21">
    <location>
        <begin position="1499"/>
        <end position="1501"/>
    </location>
</feature>
<feature type="turn" evidence="21">
    <location>
        <begin position="1505"/>
        <end position="1507"/>
    </location>
</feature>
<feature type="helix" evidence="21">
    <location>
        <begin position="1509"/>
        <end position="1521"/>
    </location>
</feature>
<feature type="turn" evidence="21">
    <location>
        <begin position="1522"/>
        <end position="1524"/>
    </location>
</feature>
<feature type="strand" evidence="22">
    <location>
        <begin position="1525"/>
        <end position="1529"/>
    </location>
</feature>
<feature type="helix" evidence="21">
    <location>
        <begin position="1530"/>
        <end position="1539"/>
    </location>
</feature>
<feature type="helix" evidence="21">
    <location>
        <begin position="1544"/>
        <end position="1547"/>
    </location>
</feature>
<feature type="helix" evidence="21">
    <location>
        <begin position="1550"/>
        <end position="1570"/>
    </location>
</feature>
<feature type="helix" evidence="21">
    <location>
        <begin position="1590"/>
        <end position="1601"/>
    </location>
</feature>